<organism>
    <name type="scientific">Bos taurus</name>
    <name type="common">Bovine</name>
    <dbReference type="NCBI Taxonomy" id="9913"/>
    <lineage>
        <taxon>Eukaryota</taxon>
        <taxon>Metazoa</taxon>
        <taxon>Chordata</taxon>
        <taxon>Craniata</taxon>
        <taxon>Vertebrata</taxon>
        <taxon>Euteleostomi</taxon>
        <taxon>Mammalia</taxon>
        <taxon>Eutheria</taxon>
        <taxon>Laurasiatheria</taxon>
        <taxon>Artiodactyla</taxon>
        <taxon>Ruminantia</taxon>
        <taxon>Pecora</taxon>
        <taxon>Bovidae</taxon>
        <taxon>Bovinae</taxon>
        <taxon>Bos</taxon>
    </lineage>
</organism>
<dbReference type="EMBL" id="BT020651">
    <property type="protein sequence ID" value="AAX08668.1"/>
    <property type="molecule type" value="mRNA"/>
</dbReference>
<dbReference type="EMBL" id="BT020781">
    <property type="protein sequence ID" value="AAX08798.1"/>
    <property type="molecule type" value="mRNA"/>
</dbReference>
<dbReference type="EMBL" id="BT020876">
    <property type="protein sequence ID" value="AAX08893.1"/>
    <property type="molecule type" value="mRNA"/>
</dbReference>
<dbReference type="EMBL" id="BT020884">
    <property type="protein sequence ID" value="AAX08901.1"/>
    <property type="molecule type" value="mRNA"/>
</dbReference>
<dbReference type="EMBL" id="BT020898">
    <property type="protein sequence ID" value="AAX08915.1"/>
    <property type="molecule type" value="mRNA"/>
</dbReference>
<dbReference type="EMBL" id="BC113270">
    <property type="protein sequence ID" value="AAI13271.1"/>
    <property type="molecule type" value="mRNA"/>
</dbReference>
<dbReference type="RefSeq" id="NP_001015582.1">
    <property type="nucleotide sequence ID" value="NM_001015582.1"/>
</dbReference>
<dbReference type="SMR" id="Q29S07"/>
<dbReference type="FunCoup" id="Q29S07">
    <property type="interactions" value="1701"/>
</dbReference>
<dbReference type="STRING" id="9913.ENSBTAP00000039624"/>
<dbReference type="PaxDb" id="9913-ENSBTAP00000039624"/>
<dbReference type="Ensembl" id="ENSBTAT00000039838.4">
    <property type="protein sequence ID" value="ENSBTAP00000039624.2"/>
    <property type="gene ID" value="ENSBTAG00000027665.4"/>
</dbReference>
<dbReference type="GeneID" id="512789"/>
<dbReference type="KEGG" id="bta:512789"/>
<dbReference type="CTD" id="55290"/>
<dbReference type="VEuPathDB" id="HostDB:ENSBTAG00000027665"/>
<dbReference type="VGNC" id="VGNC:26563">
    <property type="gene designation" value="BRF2"/>
</dbReference>
<dbReference type="eggNOG" id="KOG1598">
    <property type="taxonomic scope" value="Eukaryota"/>
</dbReference>
<dbReference type="GeneTree" id="ENSGT00390000002288"/>
<dbReference type="HOGENOM" id="CLU_039947_0_0_1"/>
<dbReference type="InParanoid" id="Q29S07"/>
<dbReference type="OMA" id="DLPHPAY"/>
<dbReference type="OrthoDB" id="2121711at2759"/>
<dbReference type="TreeFam" id="TF331596"/>
<dbReference type="Reactome" id="R-BTA-76071">
    <property type="pathway name" value="RNA Polymerase III Transcription Initiation From Type 3 Promoter"/>
</dbReference>
<dbReference type="Proteomes" id="UP000009136">
    <property type="component" value="Chromosome 27"/>
</dbReference>
<dbReference type="Bgee" id="ENSBTAG00000027665">
    <property type="expression patterns" value="Expressed in uterine horn and 106 other cell types or tissues"/>
</dbReference>
<dbReference type="GO" id="GO:0005634">
    <property type="term" value="C:nucleus"/>
    <property type="evidence" value="ECO:0000318"/>
    <property type="project" value="GO_Central"/>
</dbReference>
<dbReference type="GO" id="GO:0000126">
    <property type="term" value="C:transcription factor TFIIIB complex"/>
    <property type="evidence" value="ECO:0000250"/>
    <property type="project" value="UniProtKB"/>
</dbReference>
<dbReference type="GO" id="GO:0097550">
    <property type="term" value="C:transcription preinitiation complex"/>
    <property type="evidence" value="ECO:0000318"/>
    <property type="project" value="GO_Central"/>
</dbReference>
<dbReference type="GO" id="GO:0016251">
    <property type="term" value="F:RNA polymerase II general transcription initiation factor activity"/>
    <property type="evidence" value="ECO:0000318"/>
    <property type="project" value="GO_Central"/>
</dbReference>
<dbReference type="GO" id="GO:0001006">
    <property type="term" value="F:RNA polymerase III type 3 promoter sequence-specific DNA binding"/>
    <property type="evidence" value="ECO:0000250"/>
    <property type="project" value="UniProtKB"/>
</dbReference>
<dbReference type="GO" id="GO:0017025">
    <property type="term" value="F:TBP-class protein binding"/>
    <property type="evidence" value="ECO:0000318"/>
    <property type="project" value="GO_Central"/>
</dbReference>
<dbReference type="GO" id="GO:0008270">
    <property type="term" value="F:zinc ion binding"/>
    <property type="evidence" value="ECO:0007669"/>
    <property type="project" value="UniProtKB-KW"/>
</dbReference>
<dbReference type="GO" id="GO:0034599">
    <property type="term" value="P:cellular response to oxidative stress"/>
    <property type="evidence" value="ECO:0000250"/>
    <property type="project" value="UniProtKB"/>
</dbReference>
<dbReference type="GO" id="GO:0006359">
    <property type="term" value="P:regulation of transcription by RNA polymerase III"/>
    <property type="evidence" value="ECO:0000250"/>
    <property type="project" value="UniProtKB"/>
</dbReference>
<dbReference type="GO" id="GO:0070897">
    <property type="term" value="P:transcription preinitiation complex assembly"/>
    <property type="evidence" value="ECO:0007669"/>
    <property type="project" value="InterPro"/>
</dbReference>
<dbReference type="CDD" id="cd20555">
    <property type="entry name" value="CYCLIN_BRF2"/>
    <property type="match status" value="1"/>
</dbReference>
<dbReference type="FunFam" id="1.10.472.10:FF:000223">
    <property type="entry name" value="BRF2, RNA polymerase III transcription initiation factor subunit"/>
    <property type="match status" value="1"/>
</dbReference>
<dbReference type="FunFam" id="1.10.472.10:FF:000046">
    <property type="entry name" value="Transcription factor IIIB 50 kDa subunit"/>
    <property type="match status" value="1"/>
</dbReference>
<dbReference type="FunFam" id="2.20.25.10:FF:000014">
    <property type="entry name" value="Transcription factor IIIB 50 kDa subunit"/>
    <property type="match status" value="1"/>
</dbReference>
<dbReference type="Gene3D" id="2.20.25.10">
    <property type="match status" value="1"/>
</dbReference>
<dbReference type="Gene3D" id="1.10.472.10">
    <property type="entry name" value="Cyclin-like"/>
    <property type="match status" value="2"/>
</dbReference>
<dbReference type="InterPro" id="IPR054078">
    <property type="entry name" value="BRF2-like_C"/>
</dbReference>
<dbReference type="InterPro" id="IPR036915">
    <property type="entry name" value="Cyclin-like_sf"/>
</dbReference>
<dbReference type="InterPro" id="IPR000812">
    <property type="entry name" value="TFIIB"/>
</dbReference>
<dbReference type="InterPro" id="IPR013137">
    <property type="entry name" value="Znf_TFIIB"/>
</dbReference>
<dbReference type="PANTHER" id="PTHR11618:SF5">
    <property type="entry name" value="TRANSCRIPTION FACTOR IIIB 50 KDA SUBUNIT"/>
    <property type="match status" value="1"/>
</dbReference>
<dbReference type="PANTHER" id="PTHR11618">
    <property type="entry name" value="TRANSCRIPTION INITIATION FACTOR IIB-RELATED"/>
    <property type="match status" value="1"/>
</dbReference>
<dbReference type="Pfam" id="PF21886">
    <property type="entry name" value="BRF2-like_C_cyclin_rpt"/>
    <property type="match status" value="1"/>
</dbReference>
<dbReference type="Pfam" id="PF08271">
    <property type="entry name" value="Zn_Ribbon_TF"/>
    <property type="match status" value="1"/>
</dbReference>
<dbReference type="SUPFAM" id="SSF47954">
    <property type="entry name" value="Cyclin-like"/>
    <property type="match status" value="1"/>
</dbReference>
<dbReference type="SUPFAM" id="SSF57783">
    <property type="entry name" value="Zinc beta-ribbon"/>
    <property type="match status" value="1"/>
</dbReference>
<dbReference type="PROSITE" id="PS51134">
    <property type="entry name" value="ZF_TFIIB"/>
    <property type="match status" value="1"/>
</dbReference>
<comment type="function">
    <text evidence="1">General activator of RNA polymerase III transcription. Factor exclusively required for RNA polymerase III transcription of genes with promoter elements upstream of the initiation sites. Contributes to the regulation of gene expression; functions as activator in the absence of oxidative stress. Down-regulates expression of target genes in response to oxidative stress. Overexpression protects cells against apoptosis in response to oxidative stress.</text>
</comment>
<comment type="subunit">
    <text evidence="1">Component of TFIIIB complexes. The TFIIIB complex has two activities, alpha and beta. The TFIIIB-alpha activity complex is composed of TBP, BDP1, and a complex containing both BRF2 and at least four stably associated proteins; this complex inhibits the transcription by pol III via its phosphorylation by CK2; YY1 facilitates the TFIIIB-alpha complex formation. Interacts with TBP; this interaction promotes recruitment of BRF2 to TATA box-containing promoters. Interacts with TBP and the BURE sequence (GC-rich sequence downstream from the TATA box) to form a strong ternary complex which is joined by BDP1; this ternary complex stimulates pol III transcription. Forms a trimeric complex composed of TBP, BRF2 and mini-SNAPc complex (SNAP43, SNAP50, and the N-terminal third of SNAP190) on the promoter. Assembly of the TBP-BRF2 complex is stimulated by SNAP190. Interacts with MAF1 and SNAPC4.</text>
</comment>
<comment type="subcellular location">
    <subcellularLocation>
        <location evidence="1">Nucleus</location>
    </subcellularLocation>
</comment>
<comment type="PTM">
    <text evidence="1">In response to oxidative stress, Cys-363 is reversibly oxidized to cysteine sulfenic acid. Oxidation of Cys-363 impairs formation of a ternary complex with TBP and DNA and down-regulates expression of target genes in response to oxidative stress.</text>
</comment>
<comment type="similarity">
    <text evidence="4">Belongs to the TFIIB family.</text>
</comment>
<sequence>MPGRGRCPDCGSAELVEDSHYSQNQLVCSDCGCVVTEGVLTTTFSDEGNLREVTYSRSTGENEQVSRSQQRGLRRVRDLCRVLQLPPTFEDTAVAYYQQAHQLAGIRTARLQKKEVLAGCCVLITCRQRNWPLTMGTICTLLYADLDVFSGTYMQIVKLLGLDVPSLCLVDLVKTYCSSFKLFEASPSVPAKYVEDKEKMLSRTLQLVELADETWLVTGRHPLPVITAATFLAWQSLRPSDRLTCSLARFCKLANVDLPYPASSRLQELLAVLLRMAEQLAWLQVLKLDKRSVVKHIGDLLQHRHMLVRKAFRDGTAEMDAGEKELQGQGQGQGLGDEDVGSSSLELPAGKRPSSPALLLPPCMLKPPKRVCPAPPVSMVTGDEDISDSEIEQYLRTPQEVRDFQKAQAARQAAQGTPNPP</sequence>
<name>BRF2_BOVIN</name>
<accession>Q29S07</accession>
<accession>Q5E9M2</accession>
<accession>Q5E9P4</accession>
<accession>Q5EAB8</accession>
<gene>
    <name type="primary">BRF2</name>
</gene>
<proteinExistence type="evidence at transcript level"/>
<feature type="chain" id="PRO_0000337186" description="Transcription factor IIIB 50 kDa subunit">
    <location>
        <begin position="1"/>
        <end position="421"/>
    </location>
</feature>
<feature type="repeat" description="1">
    <location>
        <begin position="72"/>
        <end position="157"/>
    </location>
</feature>
<feature type="repeat" description="2">
    <location>
        <begin position="173"/>
        <end position="249"/>
    </location>
</feature>
<feature type="zinc finger region" description="TFIIB-type" evidence="2">
    <location>
        <begin position="2"/>
        <end position="36"/>
    </location>
</feature>
<feature type="region of interest" description="Interaction with target DNA" evidence="1">
    <location>
        <begin position="108"/>
        <end position="114"/>
    </location>
</feature>
<feature type="region of interest" description="Disordered" evidence="3">
    <location>
        <begin position="325"/>
        <end position="357"/>
    </location>
</feature>
<feature type="region of interest" description="Required for the formation of a ternary complex with DNA and TBP; not required for interaction with TBP in the absence of DNA" evidence="1">
    <location>
        <begin position="359"/>
        <end position="365"/>
    </location>
</feature>
<feature type="region of interest" description="Required for interaction with TBP and formation of a ternary complex with DNA and TBP" evidence="1">
    <location>
        <begin position="367"/>
        <end position="421"/>
    </location>
</feature>
<feature type="binding site" evidence="2">
    <location>
        <position position="7"/>
    </location>
    <ligand>
        <name>Zn(2+)</name>
        <dbReference type="ChEBI" id="CHEBI:29105"/>
    </ligand>
</feature>
<feature type="binding site" evidence="2">
    <location>
        <position position="10"/>
    </location>
    <ligand>
        <name>Zn(2+)</name>
        <dbReference type="ChEBI" id="CHEBI:29105"/>
    </ligand>
</feature>
<feature type="binding site" evidence="2">
    <location>
        <position position="28"/>
    </location>
    <ligand>
        <name>Zn(2+)</name>
        <dbReference type="ChEBI" id="CHEBI:29105"/>
    </ligand>
</feature>
<feature type="binding site" evidence="2">
    <location>
        <position position="31"/>
    </location>
    <ligand>
        <name>Zn(2+)</name>
        <dbReference type="ChEBI" id="CHEBI:29105"/>
    </ligand>
</feature>
<feature type="modified residue" description="Phosphoserine" evidence="1">
    <location>
        <position position="355"/>
    </location>
</feature>
<feature type="modified residue" description="Cysteine sulfenic acid (-SOH)" evidence="1">
    <location>
        <position position="363"/>
    </location>
</feature>
<feature type="sequence conflict" description="In Ref. 1; AAX08668/AAX08915." evidence="4" ref="1">
    <original>R</original>
    <variation>Q</variation>
    <location>
        <position position="238"/>
    </location>
</feature>
<feature type="sequence conflict" description="In Ref. 1; AAX08668/AAX08798/AAX08893/AAX08901/AAX08915." evidence="4" ref="1">
    <original>G</original>
    <variation>A</variation>
    <location>
        <position position="334"/>
    </location>
</feature>
<feature type="sequence conflict" description="In Ref. 1; AAX08915." evidence="4" ref="1">
    <original>P</original>
    <variation>A</variation>
    <location>
        <position position="368"/>
    </location>
</feature>
<feature type="sequence conflict" description="In Ref. 1; AAX08915." evidence="4" ref="1">
    <original>V</original>
    <variation>G</variation>
    <location>
        <position position="380"/>
    </location>
</feature>
<evidence type="ECO:0000250" key="1">
    <source>
        <dbReference type="UniProtKB" id="Q9HAW0"/>
    </source>
</evidence>
<evidence type="ECO:0000255" key="2">
    <source>
        <dbReference type="PROSITE-ProRule" id="PRU00469"/>
    </source>
</evidence>
<evidence type="ECO:0000256" key="3">
    <source>
        <dbReference type="SAM" id="MobiDB-lite"/>
    </source>
</evidence>
<evidence type="ECO:0000305" key="4"/>
<protein>
    <recommendedName>
        <fullName>Transcription factor IIIB 50 kDa subunit</fullName>
    </recommendedName>
    <alternativeName>
        <fullName>B-related factor 2</fullName>
        <shortName>BRF-2</shortName>
    </alternativeName>
</protein>
<keyword id="KW-0010">Activator</keyword>
<keyword id="KW-0479">Metal-binding</keyword>
<keyword id="KW-0539">Nucleus</keyword>
<keyword id="KW-0558">Oxidation</keyword>
<keyword id="KW-0597">Phosphoprotein</keyword>
<keyword id="KW-1185">Reference proteome</keyword>
<keyword id="KW-0677">Repeat</keyword>
<keyword id="KW-0804">Transcription</keyword>
<keyword id="KW-0805">Transcription regulation</keyword>
<keyword id="KW-0862">Zinc</keyword>
<keyword id="KW-0863">Zinc-finger</keyword>
<reference key="1">
    <citation type="journal article" date="2005" name="BMC Genomics">
        <title>Characterization of 954 bovine full-CDS cDNA sequences.</title>
        <authorList>
            <person name="Harhay G.P."/>
            <person name="Sonstegard T.S."/>
            <person name="Keele J.W."/>
            <person name="Heaton M.P."/>
            <person name="Clawson M.L."/>
            <person name="Snelling W.M."/>
            <person name="Wiedmann R.T."/>
            <person name="Van Tassell C.P."/>
            <person name="Smith T.P.L."/>
        </authorList>
    </citation>
    <scope>NUCLEOTIDE SEQUENCE [LARGE SCALE MRNA]</scope>
</reference>
<reference key="2">
    <citation type="submission" date="2006-02" db="EMBL/GenBank/DDBJ databases">
        <authorList>
            <consortium name="NIH - Mammalian Gene Collection (MGC) project"/>
        </authorList>
    </citation>
    <scope>NUCLEOTIDE SEQUENCE [LARGE SCALE MRNA]</scope>
    <source>
        <strain>Hereford</strain>
        <tissue>Uterus</tissue>
    </source>
</reference>